<proteinExistence type="evidence at protein level"/>
<reference key="1">
    <citation type="journal article" date="1998" name="DNA Res.">
        <title>Complete sequence and gene organization of the genome of a hyper-thermophilic archaebacterium, Pyrococcus horikoshii OT3.</title>
        <authorList>
            <person name="Kawarabayasi Y."/>
            <person name="Sawada M."/>
            <person name="Horikawa H."/>
            <person name="Haikawa Y."/>
            <person name="Hino Y."/>
            <person name="Yamamoto S."/>
            <person name="Sekine M."/>
            <person name="Baba S."/>
            <person name="Kosugi H."/>
            <person name="Hosoyama A."/>
            <person name="Nagai Y."/>
            <person name="Sakai M."/>
            <person name="Ogura K."/>
            <person name="Otsuka R."/>
            <person name="Nakazawa H."/>
            <person name="Takamiya M."/>
            <person name="Ohfuku Y."/>
            <person name="Funahashi T."/>
            <person name="Tanaka T."/>
            <person name="Kudoh Y."/>
            <person name="Yamazaki J."/>
            <person name="Kushida N."/>
            <person name="Oguchi A."/>
            <person name="Aoki K."/>
            <person name="Yoshizawa T."/>
            <person name="Nakamura Y."/>
            <person name="Robb F.T."/>
            <person name="Horikoshi K."/>
            <person name="Masuchi Y."/>
            <person name="Shizuya H."/>
            <person name="Kikuchi H."/>
        </authorList>
    </citation>
    <scope>NUCLEOTIDE SEQUENCE [LARGE SCALE GENOMIC DNA]</scope>
    <source>
        <strain>ATCC 700860 / DSM 12428 / JCM 9974 / NBRC 100139 / OT-3</strain>
    </source>
</reference>
<gene>
    <name evidence="1" type="primary">albA</name>
    <name type="ordered locus">PH1839.1</name>
    <name type="ORF">PHS053</name>
</gene>
<accession>O74101</accession>
<evidence type="ECO:0000255" key="1">
    <source>
        <dbReference type="HAMAP-Rule" id="MF_01122"/>
    </source>
</evidence>
<evidence type="ECO:0007829" key="2">
    <source>
        <dbReference type="PDB" id="2Z7C"/>
    </source>
</evidence>
<sequence length="93" mass="10382">MTEEHVVYIGKKPVMNYVLAVITQFHEGAKEVSIKARGRAISRAVDVAEIVRNRFLKDDVDVKEIKIGTEELPTADGRTTNTSTIEIVLARKT</sequence>
<keyword id="KW-0002">3D-structure</keyword>
<keyword id="KW-0007">Acetylation</keyword>
<keyword id="KW-0158">Chromosome</keyword>
<keyword id="KW-0963">Cytoplasm</keyword>
<keyword id="KW-0226">DNA condensation</keyword>
<keyword id="KW-0238">DNA-binding</keyword>
<comment type="function">
    <text evidence="1">Binds double-stranded DNA tightly but without sequence specificity. Involved in DNA compaction.</text>
</comment>
<comment type="subcellular location">
    <subcellularLocation>
        <location evidence="1">Cytoplasm</location>
    </subcellularLocation>
    <subcellularLocation>
        <location evidence="1">Chromosome</location>
    </subcellularLocation>
</comment>
<comment type="PTM">
    <text evidence="1">Acetylated. Acetylation at Lys-11 decreases DNA-binding affinity.</text>
</comment>
<comment type="similarity">
    <text evidence="1">Belongs to the histone-like Alba family.</text>
</comment>
<organism>
    <name type="scientific">Pyrococcus horikoshii (strain ATCC 700860 / DSM 12428 / JCM 9974 / NBRC 100139 / OT-3)</name>
    <dbReference type="NCBI Taxonomy" id="70601"/>
    <lineage>
        <taxon>Archaea</taxon>
        <taxon>Methanobacteriati</taxon>
        <taxon>Methanobacteriota</taxon>
        <taxon>Thermococci</taxon>
        <taxon>Thermococcales</taxon>
        <taxon>Thermococcaceae</taxon>
        <taxon>Pyrococcus</taxon>
    </lineage>
</organism>
<dbReference type="EMBL" id="BA000001">
    <property type="protein sequence ID" value="BAA30960.1"/>
    <property type="molecule type" value="Genomic_DNA"/>
</dbReference>
<dbReference type="PIR" id="A71196">
    <property type="entry name" value="A71196"/>
</dbReference>
<dbReference type="RefSeq" id="WP_010885899.1">
    <property type="nucleotide sequence ID" value="NC_000961.1"/>
</dbReference>
<dbReference type="PDB" id="2Z7C">
    <property type="method" value="X-ray"/>
    <property type="resolution" value="2.80 A"/>
    <property type="chains" value="A/B/C/D=1-93"/>
</dbReference>
<dbReference type="PDBsum" id="2Z7C"/>
<dbReference type="SMR" id="O74101"/>
<dbReference type="MINT" id="O74101"/>
<dbReference type="STRING" id="70601.gene:9378843"/>
<dbReference type="EnsemblBacteria" id="BAA30960">
    <property type="protein sequence ID" value="BAA30960"/>
    <property type="gene ID" value="BAA30960"/>
</dbReference>
<dbReference type="GeneID" id="1442681"/>
<dbReference type="KEGG" id="pho:PHS053"/>
<dbReference type="eggNOG" id="arCOG01753">
    <property type="taxonomic scope" value="Archaea"/>
</dbReference>
<dbReference type="OrthoDB" id="10360at2157"/>
<dbReference type="EvolutionaryTrace" id="O74101"/>
<dbReference type="Proteomes" id="UP000000752">
    <property type="component" value="Chromosome"/>
</dbReference>
<dbReference type="GO" id="GO:0005694">
    <property type="term" value="C:chromosome"/>
    <property type="evidence" value="ECO:0007669"/>
    <property type="project" value="UniProtKB-SubCell"/>
</dbReference>
<dbReference type="GO" id="GO:0005737">
    <property type="term" value="C:cytoplasm"/>
    <property type="evidence" value="ECO:0007669"/>
    <property type="project" value="UniProtKB-SubCell"/>
</dbReference>
<dbReference type="GO" id="GO:0003690">
    <property type="term" value="F:double-stranded DNA binding"/>
    <property type="evidence" value="ECO:0007669"/>
    <property type="project" value="UniProtKB-UniRule"/>
</dbReference>
<dbReference type="GO" id="GO:0003723">
    <property type="term" value="F:RNA binding"/>
    <property type="evidence" value="ECO:0007669"/>
    <property type="project" value="InterPro"/>
</dbReference>
<dbReference type="GO" id="GO:0030261">
    <property type="term" value="P:chromosome condensation"/>
    <property type="evidence" value="ECO:0007669"/>
    <property type="project" value="UniProtKB-KW"/>
</dbReference>
<dbReference type="Gene3D" id="3.30.110.20">
    <property type="entry name" value="Alba-like domain"/>
    <property type="match status" value="1"/>
</dbReference>
<dbReference type="HAMAP" id="MF_01122">
    <property type="entry name" value="AlbA"/>
    <property type="match status" value="1"/>
</dbReference>
<dbReference type="InterPro" id="IPR036882">
    <property type="entry name" value="Alba-like_dom_sf"/>
</dbReference>
<dbReference type="InterPro" id="IPR013795">
    <property type="entry name" value="DNA/RNA-bd_Alba"/>
</dbReference>
<dbReference type="InterPro" id="IPR002775">
    <property type="entry name" value="DNA/RNA-bd_Alba-like"/>
</dbReference>
<dbReference type="NCBIfam" id="TIGR00285">
    <property type="entry name" value="DNA-binding protein Alba"/>
    <property type="match status" value="1"/>
</dbReference>
<dbReference type="NCBIfam" id="NF003088">
    <property type="entry name" value="PRK04015.1"/>
    <property type="match status" value="1"/>
</dbReference>
<dbReference type="Pfam" id="PF01918">
    <property type="entry name" value="Alba"/>
    <property type="match status" value="1"/>
</dbReference>
<dbReference type="PIRSF" id="PIRSF028732">
    <property type="entry name" value="Alba"/>
    <property type="match status" value="1"/>
</dbReference>
<dbReference type="SUPFAM" id="SSF82704">
    <property type="entry name" value="AlbA-like"/>
    <property type="match status" value="1"/>
</dbReference>
<feature type="chain" id="PRO_0000151707" description="DNA/RNA-binding protein Alba">
    <location>
        <begin position="1"/>
        <end position="93"/>
    </location>
</feature>
<feature type="modified residue" description="N6-acetyllysine" evidence="1">
    <location>
        <position position="11"/>
    </location>
</feature>
<feature type="strand" evidence="2">
    <location>
        <begin position="6"/>
        <end position="8"/>
    </location>
</feature>
<feature type="helix" evidence="2">
    <location>
        <begin position="14"/>
        <end position="26"/>
    </location>
</feature>
<feature type="strand" evidence="2">
    <location>
        <begin position="30"/>
        <end position="37"/>
    </location>
</feature>
<feature type="helix" evidence="2">
    <location>
        <begin position="40"/>
        <end position="54"/>
    </location>
</feature>
<feature type="strand" evidence="2">
    <location>
        <begin position="61"/>
        <end position="73"/>
    </location>
</feature>
<feature type="strand" evidence="2">
    <location>
        <begin position="79"/>
        <end position="90"/>
    </location>
</feature>
<protein>
    <recommendedName>
        <fullName evidence="1">DNA/RNA-binding protein Alba</fullName>
    </recommendedName>
</protein>
<name>ALBA_PYRHO</name>